<evidence type="ECO:0000255" key="1"/>
<evidence type="ECO:0000255" key="2">
    <source>
        <dbReference type="PROSITE-ProRule" id="PRU00691"/>
    </source>
</evidence>
<evidence type="ECO:0000305" key="3"/>
<comment type="subcellular location">
    <subcellularLocation>
        <location evidence="3">Membrane</location>
        <topology evidence="3">Single-pass membrane protein</topology>
    </subcellularLocation>
</comment>
<feature type="signal peptide" evidence="1">
    <location>
        <begin position="1"/>
        <end position="21"/>
    </location>
</feature>
<feature type="chain" id="PRO_0000400048" description="5'-adenylylsulfate reductase-like 5">
    <location>
        <begin position="22"/>
        <end position="301"/>
    </location>
</feature>
<feature type="transmembrane region" description="Helical" evidence="1">
    <location>
        <begin position="201"/>
        <end position="221"/>
    </location>
</feature>
<feature type="domain" description="Thioredoxin" evidence="2">
    <location>
        <begin position="51"/>
        <end position="164"/>
    </location>
</feature>
<feature type="glycosylation site" description="N-linked (GlcNAc...) asparagine" evidence="1">
    <location>
        <position position="139"/>
    </location>
</feature>
<feature type="glycosylation site" description="N-linked (GlcNAc...) asparagine" evidence="1">
    <location>
        <position position="268"/>
    </location>
</feature>
<feature type="sequence conflict" description="In Ref. 6; AK100198." evidence="3" ref="6">
    <original>I</original>
    <variation>R</variation>
    <location>
        <position position="109"/>
    </location>
</feature>
<protein>
    <recommendedName>
        <fullName>5'-adenylylsulfate reductase-like 5</fullName>
    </recommendedName>
    <alternativeName>
        <fullName>Adenosine 5'-phosphosulfate reductase-like 5</fullName>
        <shortName>APR-like 5</shortName>
        <shortName>OsAPRL5</shortName>
    </alternativeName>
</protein>
<organism>
    <name type="scientific">Oryza sativa subsp. japonica</name>
    <name type="common">Rice</name>
    <dbReference type="NCBI Taxonomy" id="39947"/>
    <lineage>
        <taxon>Eukaryota</taxon>
        <taxon>Viridiplantae</taxon>
        <taxon>Streptophyta</taxon>
        <taxon>Embryophyta</taxon>
        <taxon>Tracheophyta</taxon>
        <taxon>Spermatophyta</taxon>
        <taxon>Magnoliopsida</taxon>
        <taxon>Liliopsida</taxon>
        <taxon>Poales</taxon>
        <taxon>Poaceae</taxon>
        <taxon>BOP clade</taxon>
        <taxon>Oryzoideae</taxon>
        <taxon>Oryzeae</taxon>
        <taxon>Oryzinae</taxon>
        <taxon>Oryza</taxon>
        <taxon>Oryza sativa</taxon>
    </lineage>
</organism>
<keyword id="KW-0325">Glycoprotein</keyword>
<keyword id="KW-0472">Membrane</keyword>
<keyword id="KW-1185">Reference proteome</keyword>
<keyword id="KW-0732">Signal</keyword>
<keyword id="KW-0812">Transmembrane</keyword>
<keyword id="KW-1133">Transmembrane helix</keyword>
<name>APRL5_ORYSJ</name>
<proteinExistence type="evidence at transcript level"/>
<dbReference type="EMBL" id="AC135958">
    <property type="protein sequence ID" value="AAP21422.1"/>
    <property type="molecule type" value="Genomic_DNA"/>
</dbReference>
<dbReference type="EMBL" id="DP000009">
    <property type="protein sequence ID" value="ABF99443.1"/>
    <property type="molecule type" value="Genomic_DNA"/>
</dbReference>
<dbReference type="EMBL" id="AP008209">
    <property type="protein sequence ID" value="BAF13549.1"/>
    <property type="molecule type" value="Genomic_DNA"/>
</dbReference>
<dbReference type="EMBL" id="AP014959">
    <property type="protein sequence ID" value="BAS86950.1"/>
    <property type="molecule type" value="Genomic_DNA"/>
</dbReference>
<dbReference type="EMBL" id="CM000140">
    <property type="protein sequence ID" value="EEE60139.1"/>
    <property type="molecule type" value="Genomic_DNA"/>
</dbReference>
<dbReference type="EMBL" id="AK100198">
    <property type="status" value="NOT_ANNOTATED_CDS"/>
    <property type="molecule type" value="mRNA"/>
</dbReference>
<dbReference type="RefSeq" id="XP_015632672.1">
    <property type="nucleotide sequence ID" value="XM_015777186.1"/>
</dbReference>
<dbReference type="SMR" id="Q84M47"/>
<dbReference type="FunCoup" id="Q84M47">
    <property type="interactions" value="729"/>
</dbReference>
<dbReference type="STRING" id="39947.Q84M47"/>
<dbReference type="GlyCosmos" id="Q84M47">
    <property type="glycosylation" value="2 sites, No reported glycans"/>
</dbReference>
<dbReference type="PaxDb" id="39947-Q84M47"/>
<dbReference type="EnsemblPlants" id="Os03t0806500-01">
    <property type="protein sequence ID" value="Os03t0806500-01"/>
    <property type="gene ID" value="Os03g0806500"/>
</dbReference>
<dbReference type="Gramene" id="Os03t0806500-01">
    <property type="protein sequence ID" value="Os03t0806500-01"/>
    <property type="gene ID" value="Os03g0806500"/>
</dbReference>
<dbReference type="KEGG" id="dosa:Os03g0806500"/>
<dbReference type="eggNOG" id="KOG2640">
    <property type="taxonomic scope" value="Eukaryota"/>
</dbReference>
<dbReference type="HOGENOM" id="CLU_051582_1_0_1"/>
<dbReference type="InParanoid" id="Q84M47"/>
<dbReference type="OMA" id="SPIEMDG"/>
<dbReference type="OrthoDB" id="1899781at2759"/>
<dbReference type="Proteomes" id="UP000000763">
    <property type="component" value="Chromosome 3"/>
</dbReference>
<dbReference type="Proteomes" id="UP000007752">
    <property type="component" value="Chromosome 3"/>
</dbReference>
<dbReference type="Proteomes" id="UP000059680">
    <property type="component" value="Chromosome 3"/>
</dbReference>
<dbReference type="GO" id="GO:0016020">
    <property type="term" value="C:membrane"/>
    <property type="evidence" value="ECO:0007669"/>
    <property type="project" value="UniProtKB-SubCell"/>
</dbReference>
<dbReference type="CDD" id="cd02999">
    <property type="entry name" value="PDI_a_ERp44_like"/>
    <property type="match status" value="1"/>
</dbReference>
<dbReference type="Gene3D" id="3.40.30.10">
    <property type="entry name" value="Glutaredoxin"/>
    <property type="match status" value="1"/>
</dbReference>
<dbReference type="InterPro" id="IPR044794">
    <property type="entry name" value="APRL5/7"/>
</dbReference>
<dbReference type="InterPro" id="IPR036249">
    <property type="entry name" value="Thioredoxin-like_sf"/>
</dbReference>
<dbReference type="InterPro" id="IPR013766">
    <property type="entry name" value="Thioredoxin_domain"/>
</dbReference>
<dbReference type="PANTHER" id="PTHR47126:SF3">
    <property type="entry name" value="5'-ADENYLYLSULFATE REDUCTASE-LIKE 5"/>
    <property type="match status" value="1"/>
</dbReference>
<dbReference type="PANTHER" id="PTHR47126">
    <property type="entry name" value="5'-ADENYLYLSULFATE REDUCTASE-LIKE 7"/>
    <property type="match status" value="1"/>
</dbReference>
<dbReference type="Pfam" id="PF00085">
    <property type="entry name" value="Thioredoxin"/>
    <property type="match status" value="1"/>
</dbReference>
<dbReference type="SUPFAM" id="SSF52833">
    <property type="entry name" value="Thioredoxin-like"/>
    <property type="match status" value="1"/>
</dbReference>
<dbReference type="PROSITE" id="PS51352">
    <property type="entry name" value="THIOREDOXIN_2"/>
    <property type="match status" value="1"/>
</dbReference>
<accession>Q84M47</accession>
<accession>A0A0P0W5E6</accession>
<reference key="1">
    <citation type="journal article" date="2005" name="Genome Res.">
        <title>Sequence, annotation, and analysis of synteny between rice chromosome 3 and diverged grass species.</title>
        <authorList>
            <consortium name="The rice chromosome 3 sequencing consortium"/>
            <person name="Buell C.R."/>
            <person name="Yuan Q."/>
            <person name="Ouyang S."/>
            <person name="Liu J."/>
            <person name="Zhu W."/>
            <person name="Wang A."/>
            <person name="Maiti R."/>
            <person name="Haas B."/>
            <person name="Wortman J."/>
            <person name="Pertea M."/>
            <person name="Jones K.M."/>
            <person name="Kim M."/>
            <person name="Overton L."/>
            <person name="Tsitrin T."/>
            <person name="Fadrosh D."/>
            <person name="Bera J."/>
            <person name="Weaver B."/>
            <person name="Jin S."/>
            <person name="Johri S."/>
            <person name="Reardon M."/>
            <person name="Webb K."/>
            <person name="Hill J."/>
            <person name="Moffat K."/>
            <person name="Tallon L."/>
            <person name="Van Aken S."/>
            <person name="Lewis M."/>
            <person name="Utterback T."/>
            <person name="Feldblyum T."/>
            <person name="Zismann V."/>
            <person name="Iobst S."/>
            <person name="Hsiao J."/>
            <person name="de Vazeille A.R."/>
            <person name="Salzberg S.L."/>
            <person name="White O."/>
            <person name="Fraser C.M."/>
            <person name="Yu Y."/>
            <person name="Kim H."/>
            <person name="Rambo T."/>
            <person name="Currie J."/>
            <person name="Collura K."/>
            <person name="Kernodle-Thompson S."/>
            <person name="Wei F."/>
            <person name="Kudrna K."/>
            <person name="Ammiraju J.S.S."/>
            <person name="Luo M."/>
            <person name="Goicoechea J.L."/>
            <person name="Wing R.A."/>
            <person name="Henry D."/>
            <person name="Oates R."/>
            <person name="Palmer M."/>
            <person name="Pries G."/>
            <person name="Saski C."/>
            <person name="Simmons J."/>
            <person name="Soderlund C."/>
            <person name="Nelson W."/>
            <person name="de la Bastide M."/>
            <person name="Spiegel L."/>
            <person name="Nascimento L."/>
            <person name="Huang E."/>
            <person name="Preston R."/>
            <person name="Zutavern T."/>
            <person name="Palmer L."/>
            <person name="O'Shaughnessy A."/>
            <person name="Dike S."/>
            <person name="McCombie W.R."/>
            <person name="Minx P."/>
            <person name="Cordum H."/>
            <person name="Wilson R."/>
            <person name="Jin W."/>
            <person name="Lee H.R."/>
            <person name="Jiang J."/>
            <person name="Jackson S."/>
        </authorList>
    </citation>
    <scope>NUCLEOTIDE SEQUENCE [LARGE SCALE GENOMIC DNA]</scope>
    <source>
        <strain>cv. Nipponbare</strain>
    </source>
</reference>
<reference key="2">
    <citation type="journal article" date="2005" name="Nature">
        <title>The map-based sequence of the rice genome.</title>
        <authorList>
            <consortium name="International rice genome sequencing project (IRGSP)"/>
        </authorList>
    </citation>
    <scope>NUCLEOTIDE SEQUENCE [LARGE SCALE GENOMIC DNA]</scope>
    <source>
        <strain>cv. Nipponbare</strain>
    </source>
</reference>
<reference key="3">
    <citation type="journal article" date="2008" name="Nucleic Acids Res.">
        <title>The rice annotation project database (RAP-DB): 2008 update.</title>
        <authorList>
            <consortium name="The rice annotation project (RAP)"/>
        </authorList>
    </citation>
    <scope>GENOME REANNOTATION</scope>
    <source>
        <strain>cv. Nipponbare</strain>
    </source>
</reference>
<reference key="4">
    <citation type="journal article" date="2013" name="Rice">
        <title>Improvement of the Oryza sativa Nipponbare reference genome using next generation sequence and optical map data.</title>
        <authorList>
            <person name="Kawahara Y."/>
            <person name="de la Bastide M."/>
            <person name="Hamilton J.P."/>
            <person name="Kanamori H."/>
            <person name="McCombie W.R."/>
            <person name="Ouyang S."/>
            <person name="Schwartz D.C."/>
            <person name="Tanaka T."/>
            <person name="Wu J."/>
            <person name="Zhou S."/>
            <person name="Childs K.L."/>
            <person name="Davidson R.M."/>
            <person name="Lin H."/>
            <person name="Quesada-Ocampo L."/>
            <person name="Vaillancourt B."/>
            <person name="Sakai H."/>
            <person name="Lee S.S."/>
            <person name="Kim J."/>
            <person name="Numa H."/>
            <person name="Itoh T."/>
            <person name="Buell C.R."/>
            <person name="Matsumoto T."/>
        </authorList>
    </citation>
    <scope>GENOME REANNOTATION</scope>
    <source>
        <strain>cv. Nipponbare</strain>
    </source>
</reference>
<reference key="5">
    <citation type="journal article" date="2005" name="PLoS Biol.">
        <title>The genomes of Oryza sativa: a history of duplications.</title>
        <authorList>
            <person name="Yu J."/>
            <person name="Wang J."/>
            <person name="Lin W."/>
            <person name="Li S."/>
            <person name="Li H."/>
            <person name="Zhou J."/>
            <person name="Ni P."/>
            <person name="Dong W."/>
            <person name="Hu S."/>
            <person name="Zeng C."/>
            <person name="Zhang J."/>
            <person name="Zhang Y."/>
            <person name="Li R."/>
            <person name="Xu Z."/>
            <person name="Li S."/>
            <person name="Li X."/>
            <person name="Zheng H."/>
            <person name="Cong L."/>
            <person name="Lin L."/>
            <person name="Yin J."/>
            <person name="Geng J."/>
            <person name="Li G."/>
            <person name="Shi J."/>
            <person name="Liu J."/>
            <person name="Lv H."/>
            <person name="Li J."/>
            <person name="Wang J."/>
            <person name="Deng Y."/>
            <person name="Ran L."/>
            <person name="Shi X."/>
            <person name="Wang X."/>
            <person name="Wu Q."/>
            <person name="Li C."/>
            <person name="Ren X."/>
            <person name="Wang J."/>
            <person name="Wang X."/>
            <person name="Li D."/>
            <person name="Liu D."/>
            <person name="Zhang X."/>
            <person name="Ji Z."/>
            <person name="Zhao W."/>
            <person name="Sun Y."/>
            <person name="Zhang Z."/>
            <person name="Bao J."/>
            <person name="Han Y."/>
            <person name="Dong L."/>
            <person name="Ji J."/>
            <person name="Chen P."/>
            <person name="Wu S."/>
            <person name="Liu J."/>
            <person name="Xiao Y."/>
            <person name="Bu D."/>
            <person name="Tan J."/>
            <person name="Yang L."/>
            <person name="Ye C."/>
            <person name="Zhang J."/>
            <person name="Xu J."/>
            <person name="Zhou Y."/>
            <person name="Yu Y."/>
            <person name="Zhang B."/>
            <person name="Zhuang S."/>
            <person name="Wei H."/>
            <person name="Liu B."/>
            <person name="Lei M."/>
            <person name="Yu H."/>
            <person name="Li Y."/>
            <person name="Xu H."/>
            <person name="Wei S."/>
            <person name="He X."/>
            <person name="Fang L."/>
            <person name="Zhang Z."/>
            <person name="Zhang Y."/>
            <person name="Huang X."/>
            <person name="Su Z."/>
            <person name="Tong W."/>
            <person name="Li J."/>
            <person name="Tong Z."/>
            <person name="Li S."/>
            <person name="Ye J."/>
            <person name="Wang L."/>
            <person name="Fang L."/>
            <person name="Lei T."/>
            <person name="Chen C.-S."/>
            <person name="Chen H.-C."/>
            <person name="Xu Z."/>
            <person name="Li H."/>
            <person name="Huang H."/>
            <person name="Zhang F."/>
            <person name="Xu H."/>
            <person name="Li N."/>
            <person name="Zhao C."/>
            <person name="Li S."/>
            <person name="Dong L."/>
            <person name="Huang Y."/>
            <person name="Li L."/>
            <person name="Xi Y."/>
            <person name="Qi Q."/>
            <person name="Li W."/>
            <person name="Zhang B."/>
            <person name="Hu W."/>
            <person name="Zhang Y."/>
            <person name="Tian X."/>
            <person name="Jiao Y."/>
            <person name="Liang X."/>
            <person name="Jin J."/>
            <person name="Gao L."/>
            <person name="Zheng W."/>
            <person name="Hao B."/>
            <person name="Liu S.-M."/>
            <person name="Wang W."/>
            <person name="Yuan L."/>
            <person name="Cao M."/>
            <person name="McDermott J."/>
            <person name="Samudrala R."/>
            <person name="Wang J."/>
            <person name="Wong G.K.-S."/>
            <person name="Yang H."/>
        </authorList>
    </citation>
    <scope>NUCLEOTIDE SEQUENCE [LARGE SCALE GENOMIC DNA]</scope>
    <source>
        <strain>cv. Nipponbare</strain>
    </source>
</reference>
<reference key="6">
    <citation type="journal article" date="2003" name="Science">
        <title>Collection, mapping, and annotation of over 28,000 cDNA clones from japonica rice.</title>
        <authorList>
            <consortium name="The rice full-length cDNA consortium"/>
        </authorList>
    </citation>
    <scope>NUCLEOTIDE SEQUENCE [LARGE SCALE MRNA]</scope>
    <source>
        <strain>cv. Nipponbare</strain>
    </source>
</reference>
<sequence length="301" mass="33047">MTRCAVVAAVAAVLLVAGAAAAGGGEEEEAPSTCARRGPGFVDALASRCPCIRIEPSPPVEVRGEAIAKELNLRHRGVTYSVLFYAAWCPFSSKFRPIFEALSTMFPQIYHFTVEESSAMPSLFSRYGVRGFPAILLVNETTMVRYWGPKDLSSLVDFYKETTGFDPIAYFDVDHQDSTGDFRPVTPGDRSLRKIAKDEPFVLLAVLFIILKVAAHFVPIVVSHLKTFLVVRVQNLNLGIRRGSSQLLERALNVLDVKRLCSKLRLSNKTRDLRKGASNARAWASSFTSVSLGESSSSRQA</sequence>
<gene>
    <name type="primary">APRL5</name>
    <name type="ordered locus">Os03g0806500</name>
    <name type="ordered locus">LOC_Os03g59170</name>
    <name type="ORF">OsJ_13029</name>
    <name type="ORF">OSJNBa0059E14.22</name>
</gene>